<evidence type="ECO:0000255" key="1">
    <source>
        <dbReference type="HAMAP-Rule" id="MF_00215"/>
    </source>
</evidence>
<name>COAA_ECO24</name>
<organism>
    <name type="scientific">Escherichia coli O139:H28 (strain E24377A / ETEC)</name>
    <dbReference type="NCBI Taxonomy" id="331111"/>
    <lineage>
        <taxon>Bacteria</taxon>
        <taxon>Pseudomonadati</taxon>
        <taxon>Pseudomonadota</taxon>
        <taxon>Gammaproteobacteria</taxon>
        <taxon>Enterobacterales</taxon>
        <taxon>Enterobacteriaceae</taxon>
        <taxon>Escherichia</taxon>
    </lineage>
</organism>
<feature type="chain" id="PRO_1000058632" description="Pantothenate kinase">
    <location>
        <begin position="1"/>
        <end position="316"/>
    </location>
</feature>
<feature type="binding site" evidence="1">
    <location>
        <begin position="95"/>
        <end position="102"/>
    </location>
    <ligand>
        <name>ATP</name>
        <dbReference type="ChEBI" id="CHEBI:30616"/>
    </ligand>
</feature>
<proteinExistence type="inferred from homology"/>
<sequence length="316" mass="36360">MSIKEQTLMTPYLQFDRNQWAALRDSVPMTLSEDEIARLKGINEDLSLEEVAEIYLPLSRLLNFYISSNLRRQAVLEQFLGTNGQRIPYIISIAGSVAVGKSTTARVLQALLSRWPEHRRVELITTDGFLHPNQVLKERGLMKKKGFPESYDMHRLVKFVSDLKSGVPNVTAPVYSHLIYDVIPDGDKTVVQPDILILEGLNVLQSGMDYPHDPHHVFVSDFVDFSIYVDAPEDLLQTWYINRFLKFREGAFTDPDSYFHNYAKLTKEEAIKTAMTLWKEINWLNLKQNILPTRERASLILTKSANHAVEEVRLRK</sequence>
<keyword id="KW-0067">ATP-binding</keyword>
<keyword id="KW-0173">Coenzyme A biosynthesis</keyword>
<keyword id="KW-0963">Cytoplasm</keyword>
<keyword id="KW-0418">Kinase</keyword>
<keyword id="KW-0547">Nucleotide-binding</keyword>
<keyword id="KW-1185">Reference proteome</keyword>
<keyword id="KW-0808">Transferase</keyword>
<dbReference type="EC" id="2.7.1.33" evidence="1"/>
<dbReference type="EMBL" id="CP000800">
    <property type="protein sequence ID" value="ABV18136.1"/>
    <property type="molecule type" value="Genomic_DNA"/>
</dbReference>
<dbReference type="RefSeq" id="WP_000023081.1">
    <property type="nucleotide sequence ID" value="NC_009801.1"/>
</dbReference>
<dbReference type="SMR" id="A7ZUJ0"/>
<dbReference type="GeneID" id="93777919"/>
<dbReference type="KEGG" id="ecw:EcE24377A_4513"/>
<dbReference type="HOGENOM" id="CLU_053818_1_1_6"/>
<dbReference type="UniPathway" id="UPA00241">
    <property type="reaction ID" value="UER00352"/>
</dbReference>
<dbReference type="Proteomes" id="UP000001122">
    <property type="component" value="Chromosome"/>
</dbReference>
<dbReference type="GO" id="GO:0005737">
    <property type="term" value="C:cytoplasm"/>
    <property type="evidence" value="ECO:0007669"/>
    <property type="project" value="UniProtKB-SubCell"/>
</dbReference>
<dbReference type="GO" id="GO:0005524">
    <property type="term" value="F:ATP binding"/>
    <property type="evidence" value="ECO:0007669"/>
    <property type="project" value="UniProtKB-UniRule"/>
</dbReference>
<dbReference type="GO" id="GO:0004594">
    <property type="term" value="F:pantothenate kinase activity"/>
    <property type="evidence" value="ECO:0007669"/>
    <property type="project" value="UniProtKB-UniRule"/>
</dbReference>
<dbReference type="GO" id="GO:0015937">
    <property type="term" value="P:coenzyme A biosynthetic process"/>
    <property type="evidence" value="ECO:0007669"/>
    <property type="project" value="UniProtKB-UniRule"/>
</dbReference>
<dbReference type="CDD" id="cd02025">
    <property type="entry name" value="PanK"/>
    <property type="match status" value="1"/>
</dbReference>
<dbReference type="FunFam" id="3.40.50.300:FF:000242">
    <property type="entry name" value="Pantothenate kinase"/>
    <property type="match status" value="1"/>
</dbReference>
<dbReference type="Gene3D" id="3.40.50.300">
    <property type="entry name" value="P-loop containing nucleotide triphosphate hydrolases"/>
    <property type="match status" value="1"/>
</dbReference>
<dbReference type="HAMAP" id="MF_00215">
    <property type="entry name" value="Pantothen_kinase_1"/>
    <property type="match status" value="1"/>
</dbReference>
<dbReference type="InterPro" id="IPR027417">
    <property type="entry name" value="P-loop_NTPase"/>
</dbReference>
<dbReference type="InterPro" id="IPR004566">
    <property type="entry name" value="PanK"/>
</dbReference>
<dbReference type="InterPro" id="IPR006083">
    <property type="entry name" value="PRK/URK"/>
</dbReference>
<dbReference type="NCBIfam" id="TIGR00554">
    <property type="entry name" value="panK_bact"/>
    <property type="match status" value="1"/>
</dbReference>
<dbReference type="PANTHER" id="PTHR10285">
    <property type="entry name" value="URIDINE KINASE"/>
    <property type="match status" value="1"/>
</dbReference>
<dbReference type="Pfam" id="PF00485">
    <property type="entry name" value="PRK"/>
    <property type="match status" value="1"/>
</dbReference>
<dbReference type="PIRSF" id="PIRSF000545">
    <property type="entry name" value="Pantothenate_kin"/>
    <property type="match status" value="1"/>
</dbReference>
<dbReference type="SUPFAM" id="SSF52540">
    <property type="entry name" value="P-loop containing nucleoside triphosphate hydrolases"/>
    <property type="match status" value="1"/>
</dbReference>
<protein>
    <recommendedName>
        <fullName evidence="1">Pantothenate kinase</fullName>
        <ecNumber evidence="1">2.7.1.33</ecNumber>
    </recommendedName>
    <alternativeName>
        <fullName evidence="1">Pantothenic acid kinase</fullName>
    </alternativeName>
</protein>
<comment type="catalytic activity">
    <reaction evidence="1">
        <text>(R)-pantothenate + ATP = (R)-4'-phosphopantothenate + ADP + H(+)</text>
        <dbReference type="Rhea" id="RHEA:16373"/>
        <dbReference type="ChEBI" id="CHEBI:10986"/>
        <dbReference type="ChEBI" id="CHEBI:15378"/>
        <dbReference type="ChEBI" id="CHEBI:29032"/>
        <dbReference type="ChEBI" id="CHEBI:30616"/>
        <dbReference type="ChEBI" id="CHEBI:456216"/>
        <dbReference type="EC" id="2.7.1.33"/>
    </reaction>
</comment>
<comment type="pathway">
    <text evidence="1">Cofactor biosynthesis; coenzyme A biosynthesis; CoA from (R)-pantothenate: step 1/5.</text>
</comment>
<comment type="subcellular location">
    <subcellularLocation>
        <location evidence="1">Cytoplasm</location>
    </subcellularLocation>
</comment>
<comment type="similarity">
    <text evidence="1">Belongs to the prokaryotic pantothenate kinase family.</text>
</comment>
<gene>
    <name evidence="1" type="primary">coaA</name>
    <name type="ordered locus">EcE24377A_4513</name>
</gene>
<reference key="1">
    <citation type="journal article" date="2008" name="J. Bacteriol.">
        <title>The pangenome structure of Escherichia coli: comparative genomic analysis of E. coli commensal and pathogenic isolates.</title>
        <authorList>
            <person name="Rasko D.A."/>
            <person name="Rosovitz M.J."/>
            <person name="Myers G.S.A."/>
            <person name="Mongodin E.F."/>
            <person name="Fricke W.F."/>
            <person name="Gajer P."/>
            <person name="Crabtree J."/>
            <person name="Sebaihia M."/>
            <person name="Thomson N.R."/>
            <person name="Chaudhuri R."/>
            <person name="Henderson I.R."/>
            <person name="Sperandio V."/>
            <person name="Ravel J."/>
        </authorList>
    </citation>
    <scope>NUCLEOTIDE SEQUENCE [LARGE SCALE GENOMIC DNA]</scope>
    <source>
        <strain>E24377A / ETEC</strain>
    </source>
</reference>
<accession>A7ZUJ0</accession>